<keyword id="KW-0002">3D-structure</keyword>
<keyword id="KW-0479">Metal-binding</keyword>
<keyword id="KW-1267">Proteomics identification</keyword>
<keyword id="KW-1185">Reference proteome</keyword>
<keyword id="KW-0862">Zinc</keyword>
<keyword id="KW-0863">Zinc-finger</keyword>
<gene>
    <name type="primary">RNF113B</name>
    <name type="synonym">RNF161</name>
    <name type="synonym">ZNF183L1</name>
</gene>
<feature type="chain" id="PRO_0000056088" description="RING finger protein 113B">
    <location>
        <begin position="1"/>
        <end position="322"/>
    </location>
</feature>
<feature type="zinc finger region" description="C3H1-type" evidence="2">
    <location>
        <begin position="190"/>
        <end position="218"/>
    </location>
</feature>
<feature type="zinc finger region" description="RING-type" evidence="1">
    <location>
        <begin position="256"/>
        <end position="294"/>
    </location>
</feature>
<feature type="region of interest" description="Disordered" evidence="3">
    <location>
        <begin position="24"/>
        <end position="92"/>
    </location>
</feature>
<feature type="compositionally biased region" description="Low complexity" evidence="3">
    <location>
        <begin position="46"/>
        <end position="60"/>
    </location>
</feature>
<feature type="sequence variant" id="VAR_052104" description="In dbSNP:rs16955011.">
    <original>V</original>
    <variation>M</variation>
    <location>
        <position position="92"/>
    </location>
</feature>
<feature type="sequence conflict" description="In Ref. 1; AAN33063." evidence="4" ref="1">
    <original>V</original>
    <variation>A</variation>
    <location>
        <position position="56"/>
    </location>
</feature>
<feature type="strand" evidence="5">
    <location>
        <begin position="257"/>
        <end position="259"/>
    </location>
</feature>
<feature type="strand" evidence="5">
    <location>
        <begin position="265"/>
        <end position="268"/>
    </location>
</feature>
<feature type="strand" evidence="5">
    <location>
        <begin position="274"/>
        <end position="276"/>
    </location>
</feature>
<feature type="helix" evidence="5">
    <location>
        <begin position="277"/>
        <end position="286"/>
    </location>
</feature>
<feature type="strand" evidence="5">
    <location>
        <begin position="291"/>
        <end position="293"/>
    </location>
</feature>
<feature type="helix" evidence="5">
    <location>
        <begin position="305"/>
        <end position="311"/>
    </location>
</feature>
<dbReference type="EMBL" id="AF539427">
    <property type="protein sequence ID" value="AAN33063.1"/>
    <property type="molecule type" value="mRNA"/>
</dbReference>
<dbReference type="EMBL" id="AL136300">
    <property type="status" value="NOT_ANNOTATED_CDS"/>
    <property type="molecule type" value="Genomic_DNA"/>
</dbReference>
<dbReference type="EMBL" id="BC017585">
    <property type="protein sequence ID" value="AAH17585.1"/>
    <property type="molecule type" value="mRNA"/>
</dbReference>
<dbReference type="EMBL" id="BC025388">
    <property type="protein sequence ID" value="AAH25388.1"/>
    <property type="molecule type" value="mRNA"/>
</dbReference>
<dbReference type="CCDS" id="CCDS9486.1"/>
<dbReference type="RefSeq" id="NP_849192.1">
    <property type="nucleotide sequence ID" value="NM_178861.5"/>
</dbReference>
<dbReference type="PDB" id="2CSY">
    <property type="method" value="NMR"/>
    <property type="chains" value="A=246-313"/>
</dbReference>
<dbReference type="PDBsum" id="2CSY"/>
<dbReference type="SMR" id="Q8IZP6"/>
<dbReference type="BioGRID" id="126603">
    <property type="interactions" value="8"/>
</dbReference>
<dbReference type="FunCoup" id="Q8IZP6">
    <property type="interactions" value="30"/>
</dbReference>
<dbReference type="IntAct" id="Q8IZP6">
    <property type="interactions" value="4"/>
</dbReference>
<dbReference type="STRING" id="9606.ENSP00000267291"/>
<dbReference type="iPTMnet" id="Q8IZP6"/>
<dbReference type="PhosphoSitePlus" id="Q8IZP6"/>
<dbReference type="BioMuta" id="RNF113B"/>
<dbReference type="DMDM" id="51338806"/>
<dbReference type="jPOST" id="Q8IZP6"/>
<dbReference type="MassIVE" id="Q8IZP6"/>
<dbReference type="PaxDb" id="9606-ENSP00000267291"/>
<dbReference type="PeptideAtlas" id="Q8IZP6"/>
<dbReference type="ProteomicsDB" id="71393"/>
<dbReference type="Antibodypedia" id="10782">
    <property type="antibodies" value="233 antibodies from 24 providers"/>
</dbReference>
<dbReference type="DNASU" id="140432"/>
<dbReference type="Ensembl" id="ENST00000267291.7">
    <property type="protein sequence ID" value="ENSP00000267291.6"/>
    <property type="gene ID" value="ENSG00000139797.8"/>
</dbReference>
<dbReference type="GeneID" id="140432"/>
<dbReference type="KEGG" id="hsa:140432"/>
<dbReference type="MANE-Select" id="ENST00000267291.7">
    <property type="protein sequence ID" value="ENSP00000267291.6"/>
    <property type="RefSeq nucleotide sequence ID" value="NM_178861.5"/>
    <property type="RefSeq protein sequence ID" value="NP_849192.1"/>
</dbReference>
<dbReference type="UCSC" id="uc001vnk.4">
    <property type="organism name" value="human"/>
</dbReference>
<dbReference type="AGR" id="HGNC:17267"/>
<dbReference type="CTD" id="140432"/>
<dbReference type="DisGeNET" id="140432"/>
<dbReference type="GeneCards" id="RNF113B"/>
<dbReference type="HGNC" id="HGNC:17267">
    <property type="gene designation" value="RNF113B"/>
</dbReference>
<dbReference type="HPA" id="ENSG00000139797">
    <property type="expression patterns" value="Tissue enriched (testis)"/>
</dbReference>
<dbReference type="neXtProt" id="NX_Q8IZP6"/>
<dbReference type="OpenTargets" id="ENSG00000139797"/>
<dbReference type="PharmGKB" id="PA38217"/>
<dbReference type="VEuPathDB" id="HostDB:ENSG00000139797"/>
<dbReference type="eggNOG" id="KOG1813">
    <property type="taxonomic scope" value="Eukaryota"/>
</dbReference>
<dbReference type="GeneTree" id="ENSGT00390000016292"/>
<dbReference type="HOGENOM" id="CLU_050460_1_0_1"/>
<dbReference type="InParanoid" id="Q8IZP6"/>
<dbReference type="OMA" id="RGMNNYQ"/>
<dbReference type="OrthoDB" id="25761at2759"/>
<dbReference type="PAN-GO" id="Q8IZP6">
    <property type="GO annotations" value="2 GO annotations based on evolutionary models"/>
</dbReference>
<dbReference type="PhylomeDB" id="Q8IZP6"/>
<dbReference type="TreeFam" id="TF313469"/>
<dbReference type="PathwayCommons" id="Q8IZP6"/>
<dbReference type="SignaLink" id="Q8IZP6"/>
<dbReference type="SIGNOR" id="Q8IZP6"/>
<dbReference type="BioGRID-ORCS" id="140432">
    <property type="hits" value="5 hits in 1177 CRISPR screens"/>
</dbReference>
<dbReference type="EvolutionaryTrace" id="Q8IZP6"/>
<dbReference type="GenomeRNAi" id="140432"/>
<dbReference type="Pharos" id="Q8IZP6">
    <property type="development level" value="Tdark"/>
</dbReference>
<dbReference type="PRO" id="PR:Q8IZP6"/>
<dbReference type="Proteomes" id="UP000005640">
    <property type="component" value="Chromosome 13"/>
</dbReference>
<dbReference type="RNAct" id="Q8IZP6">
    <property type="molecule type" value="protein"/>
</dbReference>
<dbReference type="Bgee" id="ENSG00000139797">
    <property type="expression patterns" value="Expressed in left testis and 26 other cell types or tissues"/>
</dbReference>
<dbReference type="GO" id="GO:0005684">
    <property type="term" value="C:U2-type spliceosomal complex"/>
    <property type="evidence" value="ECO:0000318"/>
    <property type="project" value="GO_Central"/>
</dbReference>
<dbReference type="GO" id="GO:0008270">
    <property type="term" value="F:zinc ion binding"/>
    <property type="evidence" value="ECO:0007669"/>
    <property type="project" value="UniProtKB-KW"/>
</dbReference>
<dbReference type="GO" id="GO:0034247">
    <property type="term" value="P:snoRNA splicing"/>
    <property type="evidence" value="ECO:0000318"/>
    <property type="project" value="GO_Central"/>
</dbReference>
<dbReference type="CDD" id="cd16539">
    <property type="entry name" value="RING-HC_RNF113A_B"/>
    <property type="match status" value="1"/>
</dbReference>
<dbReference type="FunFam" id="3.30.40.10:FF:000045">
    <property type="entry name" value="RING finger protein 113A"/>
    <property type="match status" value="1"/>
</dbReference>
<dbReference type="Gene3D" id="4.10.1000.10">
    <property type="entry name" value="Zinc finger, CCCH-type"/>
    <property type="match status" value="1"/>
</dbReference>
<dbReference type="Gene3D" id="3.30.40.10">
    <property type="entry name" value="Zinc/RING finger domain, C3HC4 (zinc finger)"/>
    <property type="match status" value="1"/>
</dbReference>
<dbReference type="InterPro" id="IPR039971">
    <property type="entry name" value="CWC24-like"/>
</dbReference>
<dbReference type="InterPro" id="IPR000571">
    <property type="entry name" value="Znf_CCCH"/>
</dbReference>
<dbReference type="InterPro" id="IPR036855">
    <property type="entry name" value="Znf_CCCH_sf"/>
</dbReference>
<dbReference type="InterPro" id="IPR001841">
    <property type="entry name" value="Znf_RING"/>
</dbReference>
<dbReference type="InterPro" id="IPR013083">
    <property type="entry name" value="Znf_RING/FYVE/PHD"/>
</dbReference>
<dbReference type="InterPro" id="IPR017907">
    <property type="entry name" value="Znf_RING_CS"/>
</dbReference>
<dbReference type="PANTHER" id="PTHR12930:SF1">
    <property type="entry name" value="RING FINGER PROTEIN 113B"/>
    <property type="match status" value="1"/>
</dbReference>
<dbReference type="PANTHER" id="PTHR12930">
    <property type="entry name" value="ZINC FINGER PROTEIN 183"/>
    <property type="match status" value="1"/>
</dbReference>
<dbReference type="Pfam" id="PF13920">
    <property type="entry name" value="zf-C3HC4_3"/>
    <property type="match status" value="1"/>
</dbReference>
<dbReference type="Pfam" id="PF00642">
    <property type="entry name" value="zf-CCCH"/>
    <property type="match status" value="1"/>
</dbReference>
<dbReference type="SMART" id="SM00184">
    <property type="entry name" value="RING"/>
    <property type="match status" value="1"/>
</dbReference>
<dbReference type="SMART" id="SM00356">
    <property type="entry name" value="ZnF_C3H1"/>
    <property type="match status" value="1"/>
</dbReference>
<dbReference type="SUPFAM" id="SSF90229">
    <property type="entry name" value="CCCH zinc finger"/>
    <property type="match status" value="1"/>
</dbReference>
<dbReference type="SUPFAM" id="SSF57850">
    <property type="entry name" value="RING/U-box"/>
    <property type="match status" value="1"/>
</dbReference>
<dbReference type="PROSITE" id="PS50103">
    <property type="entry name" value="ZF_C3H1"/>
    <property type="match status" value="1"/>
</dbReference>
<dbReference type="PROSITE" id="PS00518">
    <property type="entry name" value="ZF_RING_1"/>
    <property type="match status" value="1"/>
</dbReference>
<dbReference type="PROSITE" id="PS50089">
    <property type="entry name" value="ZF_RING_2"/>
    <property type="match status" value="1"/>
</dbReference>
<sequence length="322" mass="36259">MAAPPSPGRTADQADQVCTFLFKKPGRKGAAGLRKRPACDPEHGESSSSGDEGDTVAQPPRVAPRPRGLHSWQKAAHGDRRGEEAAPESLDVVYRSTRSAKPVGPEDMGATADFEQDTEKEHHTPTILKCSQRVQEALRGREHDHIYRGIHSYLRYLKPKDTSMGNSSSGMARKGPIRAPGHLRATVRWDYQPDICKDYKETGFCGFGDSCKFLHDRSDYKLGWEIERELEEGRYCICEDENHEVGSEEEEIPFRCFICRQAFQNPVVTKCRHYFCESCALEHFRATPRCYICDQPTGGIFNPAKELMAKLQKLQAAEGKKR</sequence>
<proteinExistence type="evidence at protein level"/>
<evidence type="ECO:0000255" key="1">
    <source>
        <dbReference type="PROSITE-ProRule" id="PRU00175"/>
    </source>
</evidence>
<evidence type="ECO:0000255" key="2">
    <source>
        <dbReference type="PROSITE-ProRule" id="PRU00723"/>
    </source>
</evidence>
<evidence type="ECO:0000256" key="3">
    <source>
        <dbReference type="SAM" id="MobiDB-lite"/>
    </source>
</evidence>
<evidence type="ECO:0000305" key="4"/>
<evidence type="ECO:0007829" key="5">
    <source>
        <dbReference type="PDB" id="2CSY"/>
    </source>
</evidence>
<organism>
    <name type="scientific">Homo sapiens</name>
    <name type="common">Human</name>
    <dbReference type="NCBI Taxonomy" id="9606"/>
    <lineage>
        <taxon>Eukaryota</taxon>
        <taxon>Metazoa</taxon>
        <taxon>Chordata</taxon>
        <taxon>Craniata</taxon>
        <taxon>Vertebrata</taxon>
        <taxon>Euteleostomi</taxon>
        <taxon>Mammalia</taxon>
        <taxon>Eutheria</taxon>
        <taxon>Euarchontoglires</taxon>
        <taxon>Primates</taxon>
        <taxon>Haplorrhini</taxon>
        <taxon>Catarrhini</taxon>
        <taxon>Hominidae</taxon>
        <taxon>Homo</taxon>
    </lineage>
</organism>
<name>R113B_HUMAN</name>
<reference key="1">
    <citation type="submission" date="2002-08" db="EMBL/GenBank/DDBJ databases">
        <title>A testis cDNA for a zinc finger gene closely related to ZNF183.</title>
        <authorList>
            <person name="Bonner T.I."/>
            <person name="Ferraren D.O."/>
            <person name="Detera-Wadleigh S."/>
        </authorList>
    </citation>
    <scope>NUCLEOTIDE SEQUENCE [MRNA]</scope>
    <source>
        <tissue>Testis</tissue>
    </source>
</reference>
<reference key="2">
    <citation type="journal article" date="2004" name="Nature">
        <title>The DNA sequence and analysis of human chromosome 13.</title>
        <authorList>
            <person name="Dunham A."/>
            <person name="Matthews L.H."/>
            <person name="Burton J."/>
            <person name="Ashurst J.L."/>
            <person name="Howe K.L."/>
            <person name="Ashcroft K.J."/>
            <person name="Beare D.M."/>
            <person name="Burford D.C."/>
            <person name="Hunt S.E."/>
            <person name="Griffiths-Jones S."/>
            <person name="Jones M.C."/>
            <person name="Keenan S.J."/>
            <person name="Oliver K."/>
            <person name="Scott C.E."/>
            <person name="Ainscough R."/>
            <person name="Almeida J.P."/>
            <person name="Ambrose K.D."/>
            <person name="Andrews D.T."/>
            <person name="Ashwell R.I.S."/>
            <person name="Babbage A.K."/>
            <person name="Bagguley C.L."/>
            <person name="Bailey J."/>
            <person name="Bannerjee R."/>
            <person name="Barlow K.F."/>
            <person name="Bates K."/>
            <person name="Beasley H."/>
            <person name="Bird C.P."/>
            <person name="Bray-Allen S."/>
            <person name="Brown A.J."/>
            <person name="Brown J.Y."/>
            <person name="Burrill W."/>
            <person name="Carder C."/>
            <person name="Carter N.P."/>
            <person name="Chapman J.C."/>
            <person name="Clamp M.E."/>
            <person name="Clark S.Y."/>
            <person name="Clarke G."/>
            <person name="Clee C.M."/>
            <person name="Clegg S.C."/>
            <person name="Cobley V."/>
            <person name="Collins J.E."/>
            <person name="Corby N."/>
            <person name="Coville G.J."/>
            <person name="Deloukas P."/>
            <person name="Dhami P."/>
            <person name="Dunham I."/>
            <person name="Dunn M."/>
            <person name="Earthrowl M.E."/>
            <person name="Ellington A.G."/>
            <person name="Faulkner L."/>
            <person name="Frankish A.G."/>
            <person name="Frankland J."/>
            <person name="French L."/>
            <person name="Garner P."/>
            <person name="Garnett J."/>
            <person name="Gilbert J.G.R."/>
            <person name="Gilson C.J."/>
            <person name="Ghori J."/>
            <person name="Grafham D.V."/>
            <person name="Gribble S.M."/>
            <person name="Griffiths C."/>
            <person name="Hall R.E."/>
            <person name="Hammond S."/>
            <person name="Harley J.L."/>
            <person name="Hart E.A."/>
            <person name="Heath P.D."/>
            <person name="Howden P.J."/>
            <person name="Huckle E.J."/>
            <person name="Hunt P.J."/>
            <person name="Hunt A.R."/>
            <person name="Johnson C."/>
            <person name="Johnson D."/>
            <person name="Kay M."/>
            <person name="Kimberley A.M."/>
            <person name="King A."/>
            <person name="Laird G.K."/>
            <person name="Langford C.J."/>
            <person name="Lawlor S."/>
            <person name="Leongamornlert D.A."/>
            <person name="Lloyd D.M."/>
            <person name="Lloyd C."/>
            <person name="Loveland J.E."/>
            <person name="Lovell J."/>
            <person name="Martin S."/>
            <person name="Mashreghi-Mohammadi M."/>
            <person name="McLaren S.J."/>
            <person name="McMurray A."/>
            <person name="Milne S."/>
            <person name="Moore M.J.F."/>
            <person name="Nickerson T."/>
            <person name="Palmer S.A."/>
            <person name="Pearce A.V."/>
            <person name="Peck A.I."/>
            <person name="Pelan S."/>
            <person name="Phillimore B."/>
            <person name="Porter K.M."/>
            <person name="Rice C.M."/>
            <person name="Searle S."/>
            <person name="Sehra H.K."/>
            <person name="Shownkeen R."/>
            <person name="Skuce C.D."/>
            <person name="Smith M."/>
            <person name="Steward C.A."/>
            <person name="Sycamore N."/>
            <person name="Tester J."/>
            <person name="Thomas D.W."/>
            <person name="Tracey A."/>
            <person name="Tromans A."/>
            <person name="Tubby B."/>
            <person name="Wall M."/>
            <person name="Wallis J.M."/>
            <person name="West A.P."/>
            <person name="Whitehead S.L."/>
            <person name="Willey D.L."/>
            <person name="Wilming L."/>
            <person name="Wray P.W."/>
            <person name="Wright M.W."/>
            <person name="Young L."/>
            <person name="Coulson A."/>
            <person name="Durbin R.M."/>
            <person name="Hubbard T."/>
            <person name="Sulston J.E."/>
            <person name="Beck S."/>
            <person name="Bentley D.R."/>
            <person name="Rogers J."/>
            <person name="Ross M.T."/>
        </authorList>
    </citation>
    <scope>NUCLEOTIDE SEQUENCE [LARGE SCALE GENOMIC DNA]</scope>
</reference>
<reference key="3">
    <citation type="journal article" date="2004" name="Genome Res.">
        <title>The status, quality, and expansion of the NIH full-length cDNA project: the Mammalian Gene Collection (MGC).</title>
        <authorList>
            <consortium name="The MGC Project Team"/>
        </authorList>
    </citation>
    <scope>NUCLEOTIDE SEQUENCE [LARGE SCALE MRNA]</scope>
    <source>
        <tissue>Testis</tissue>
    </source>
</reference>
<reference key="4">
    <citation type="submission" date="2005-11" db="PDB data bank">
        <title>Solution structure of the RING domain of the zinc finger protein 183-like 1.</title>
        <authorList>
            <consortium name="RIKEN structural genomics initiative (RSGI)"/>
        </authorList>
    </citation>
    <scope>STRUCTURE BY NMR OF 246-313</scope>
</reference>
<accession>Q8IZP6</accession>
<accession>Q8WWF9</accession>
<accession>Q96QY9</accession>
<protein>
    <recommendedName>
        <fullName>RING finger protein 113B</fullName>
    </recommendedName>
    <alternativeName>
        <fullName>Zinc finger protein 183-like 1</fullName>
    </alternativeName>
</protein>